<accession>Q865Y3</accession>
<name>IL12B_PAPAN</name>
<comment type="function">
    <text evidence="1">Cytokine that can act as a growth factor for activated T and NK cells, enhance the lytic activity of NK/lymphokine-activated killer cells, and stimulate the production of IFN-gamma by resting PBMC.</text>
</comment>
<comment type="function">
    <text evidence="1">Associates with IL23A to form the IL-23 interleukin, a heterodimeric cytokine which functions in innate and adaptive immunity. IL-23 may constitute with IL-17 an acute response to infection in peripheral tissues. IL-23 binds to a heterodimeric receptor complex composed of IL12RB1 and IL23R, activates the Jak-Stat signaling cascade, stimulates memory rather than naive T-cells and promotes production of pro-inflammatory cytokines. IL-23 induces autoimmune inflammation and thus may be responsible for autoimmune inflammatory diseases and may be important for tumorigenesis (By similarity).</text>
</comment>
<comment type="subunit">
    <text evidence="2 3">Heterodimer with IL12A; disulfide-linked. The heterodimer is known as interleukin IL-12. Heterodimer with IL23A; disulfide-linked. The heterodimer is known as interleukin IL-23. Also secreted as a monomer. Interacts with NBR1; this interaction promotes IL-12 secretion (By similarity).</text>
</comment>
<comment type="subcellular location">
    <subcellularLocation>
        <location evidence="1">Secreted</location>
    </subcellularLocation>
</comment>
<comment type="similarity">
    <text evidence="7">Belongs to the IL-12B family.</text>
</comment>
<gene>
    <name type="primary">IL12B</name>
</gene>
<feature type="signal peptide" evidence="1">
    <location>
        <begin position="1"/>
        <end position="22"/>
    </location>
</feature>
<feature type="chain" id="PRO_0000010934" description="Interleukin-12 subunit beta">
    <location>
        <begin position="23"/>
        <end position="328"/>
    </location>
</feature>
<feature type="domain" description="Ig-like C2-type">
    <location>
        <begin position="29"/>
        <end position="106"/>
    </location>
</feature>
<feature type="domain" description="Fibronectin type-III" evidence="6">
    <location>
        <begin position="237"/>
        <end position="328"/>
    </location>
</feature>
<feature type="glycosylation site" description="N-linked (GlcNAc...) asparagine" evidence="4">
    <location>
        <position position="125"/>
    </location>
</feature>
<feature type="glycosylation site" description="N-linked (GlcNAc...) asparagine" evidence="4">
    <location>
        <position position="135"/>
    </location>
</feature>
<feature type="glycosylation site" description="N-linked (GlcNAc...) asparagine" evidence="4">
    <location>
        <position position="222"/>
    </location>
</feature>
<feature type="glycosylation site" description="N-linked (GlcNAc...) asparagine" evidence="4">
    <location>
        <position position="303"/>
    </location>
</feature>
<feature type="disulfide bond" evidence="5">
    <location>
        <begin position="50"/>
        <end position="90"/>
    </location>
</feature>
<feature type="disulfide bond" description="Interchain (with C-96 in IL12A and C-73 in IL23A)" evidence="2 5">
    <location>
        <position position="199"/>
    </location>
</feature>
<reference key="1">
    <citation type="submission" date="2003-02" db="EMBL/GenBank/DDBJ databases">
        <title>Nonhuman primate cytokines.</title>
        <authorList>
            <person name="Villinger F.J."/>
        </authorList>
    </citation>
    <scope>NUCLEOTIDE SEQUENCE [MRNA]</scope>
</reference>
<sequence length="328" mass="37245">MCHQQLVISWFSLVFLASPLMAIWELKKDVYVVELDWYPDAPGEMVVLTCDTPEEDGITWTLDQSGEVLGSGKTLTIQVKEFGDAGQYTCHKGGEALSHSLLLLHKKEDGIWSTDVLKDQKEPKNKTFLRCEAKNYSGRFTCWWLTTISTDLTFSVKSSRGSSNPQGVTCGAVTLSAERVRGDNKEYEYSVECQEDSACPAAEERLPIEVMVDAIHKLKYENYTSSFFIRDIIKPDPPKNLQLKPLKNSRQAEVSWEYPDTWSTPHSYFSLTFCIQVQGKSKREKKDRIFTDKTSATVICRKNASFSVQAQDRYYSSSWSEWASVPCS</sequence>
<organism>
    <name type="scientific">Papio anubis</name>
    <name type="common">Olive baboon</name>
    <dbReference type="NCBI Taxonomy" id="9555"/>
    <lineage>
        <taxon>Eukaryota</taxon>
        <taxon>Metazoa</taxon>
        <taxon>Chordata</taxon>
        <taxon>Craniata</taxon>
        <taxon>Vertebrata</taxon>
        <taxon>Euteleostomi</taxon>
        <taxon>Mammalia</taxon>
        <taxon>Eutheria</taxon>
        <taxon>Euarchontoglires</taxon>
        <taxon>Primates</taxon>
        <taxon>Haplorrhini</taxon>
        <taxon>Catarrhini</taxon>
        <taxon>Cercopithecidae</taxon>
        <taxon>Cercopithecinae</taxon>
        <taxon>Papio</taxon>
    </lineage>
</organism>
<evidence type="ECO:0000250" key="1"/>
<evidence type="ECO:0000250" key="2">
    <source>
        <dbReference type="UniProtKB" id="P29460"/>
    </source>
</evidence>
<evidence type="ECO:0000250" key="3">
    <source>
        <dbReference type="UniProtKB" id="P43432"/>
    </source>
</evidence>
<evidence type="ECO:0000255" key="4"/>
<evidence type="ECO:0000255" key="5">
    <source>
        <dbReference type="PROSITE-ProRule" id="PRU00114"/>
    </source>
</evidence>
<evidence type="ECO:0000255" key="6">
    <source>
        <dbReference type="PROSITE-ProRule" id="PRU00316"/>
    </source>
</evidence>
<evidence type="ECO:0000305" key="7"/>
<proteinExistence type="evidence at transcript level"/>
<keyword id="KW-0202">Cytokine</keyword>
<keyword id="KW-1015">Disulfide bond</keyword>
<keyword id="KW-0325">Glycoprotein</keyword>
<keyword id="KW-0393">Immunoglobulin domain</keyword>
<keyword id="KW-1185">Reference proteome</keyword>
<keyword id="KW-0964">Secreted</keyword>
<keyword id="KW-0732">Signal</keyword>
<protein>
    <recommendedName>
        <fullName>Interleukin-12 subunit beta</fullName>
        <shortName>IL-12B</shortName>
    </recommendedName>
    <alternativeName>
        <fullName>Cytotoxic lymphocyte maturation factor 40 kDa subunit</fullName>
        <shortName>CLMF p40</shortName>
    </alternativeName>
    <alternativeName>
        <fullName>IL-12 subunit p40</fullName>
    </alternativeName>
</protein>
<dbReference type="EMBL" id="AY234218">
    <property type="protein sequence ID" value="AAO85331.1"/>
    <property type="molecule type" value="mRNA"/>
</dbReference>
<dbReference type="RefSeq" id="NP_001106105.1">
    <property type="nucleotide sequence ID" value="NM_001112635.1"/>
</dbReference>
<dbReference type="SMR" id="Q865Y3"/>
<dbReference type="STRING" id="9555.ENSPANP00000003288"/>
<dbReference type="GlyCosmos" id="Q865Y3">
    <property type="glycosylation" value="4 sites, No reported glycans"/>
</dbReference>
<dbReference type="GeneID" id="100126717"/>
<dbReference type="KEGG" id="panu:100126717"/>
<dbReference type="CTD" id="3593"/>
<dbReference type="eggNOG" id="ENOG502RZMA">
    <property type="taxonomic scope" value="Eukaryota"/>
</dbReference>
<dbReference type="OrthoDB" id="1827at314294"/>
<dbReference type="Proteomes" id="UP000028761">
    <property type="component" value="Unplaced"/>
</dbReference>
<dbReference type="GO" id="GO:0005615">
    <property type="term" value="C:extracellular space"/>
    <property type="evidence" value="ECO:0007669"/>
    <property type="project" value="UniProtKB-KW"/>
</dbReference>
<dbReference type="GO" id="GO:0016020">
    <property type="term" value="C:membrane"/>
    <property type="evidence" value="ECO:0007669"/>
    <property type="project" value="InterPro"/>
</dbReference>
<dbReference type="GO" id="GO:0005125">
    <property type="term" value="F:cytokine activity"/>
    <property type="evidence" value="ECO:0007669"/>
    <property type="project" value="UniProtKB-KW"/>
</dbReference>
<dbReference type="GO" id="GO:0004896">
    <property type="term" value="F:cytokine receptor activity"/>
    <property type="evidence" value="ECO:0007669"/>
    <property type="project" value="InterPro"/>
</dbReference>
<dbReference type="CDD" id="cd00063">
    <property type="entry name" value="FN3"/>
    <property type="match status" value="1"/>
</dbReference>
<dbReference type="FunFam" id="2.60.40.10:FF:000959">
    <property type="entry name" value="Interleukin-12 subunit beta"/>
    <property type="match status" value="1"/>
</dbReference>
<dbReference type="FunFam" id="2.60.40.10:FF:001008">
    <property type="entry name" value="Interleukin-12 subunit beta"/>
    <property type="match status" value="1"/>
</dbReference>
<dbReference type="FunFam" id="2.60.40.10:FF:001009">
    <property type="entry name" value="Interleukin-12 subunit beta"/>
    <property type="match status" value="1"/>
</dbReference>
<dbReference type="Gene3D" id="2.60.40.10">
    <property type="entry name" value="Immunoglobulins"/>
    <property type="match status" value="3"/>
</dbReference>
<dbReference type="InterPro" id="IPR003961">
    <property type="entry name" value="FN3_dom"/>
</dbReference>
<dbReference type="InterPro" id="IPR036116">
    <property type="entry name" value="FN3_sf"/>
</dbReference>
<dbReference type="InterPro" id="IPR003530">
    <property type="entry name" value="Hematopoietin_rcpt_L_F3_CS"/>
</dbReference>
<dbReference type="InterPro" id="IPR007110">
    <property type="entry name" value="Ig-like_dom"/>
</dbReference>
<dbReference type="InterPro" id="IPR036179">
    <property type="entry name" value="Ig-like_dom_sf"/>
</dbReference>
<dbReference type="InterPro" id="IPR013783">
    <property type="entry name" value="Ig-like_fold"/>
</dbReference>
<dbReference type="InterPro" id="IPR003598">
    <property type="entry name" value="Ig_sub2"/>
</dbReference>
<dbReference type="InterPro" id="IPR050676">
    <property type="entry name" value="IL-12"/>
</dbReference>
<dbReference type="InterPro" id="IPR015528">
    <property type="entry name" value="IL-12_beta"/>
</dbReference>
<dbReference type="InterPro" id="IPR019482">
    <property type="entry name" value="IL-12_beta_cen-dom"/>
</dbReference>
<dbReference type="PANTHER" id="PTHR48485:SF4">
    <property type="entry name" value="INTERLEUKIN-12 SUBUNIT BETA"/>
    <property type="match status" value="1"/>
</dbReference>
<dbReference type="PANTHER" id="PTHR48485">
    <property type="entry name" value="INTERLEUKIN-12 SUBUNIT BETA-RELATED"/>
    <property type="match status" value="1"/>
</dbReference>
<dbReference type="Pfam" id="PF10420">
    <property type="entry name" value="IL12p40_C"/>
    <property type="match status" value="1"/>
</dbReference>
<dbReference type="PIRSF" id="PIRSF038007">
    <property type="entry name" value="IL_12_beta"/>
    <property type="match status" value="1"/>
</dbReference>
<dbReference type="PRINTS" id="PR01928">
    <property type="entry name" value="INTRLEUKN12B"/>
</dbReference>
<dbReference type="SMART" id="SM00408">
    <property type="entry name" value="IGc2"/>
    <property type="match status" value="1"/>
</dbReference>
<dbReference type="SUPFAM" id="SSF49265">
    <property type="entry name" value="Fibronectin type III"/>
    <property type="match status" value="2"/>
</dbReference>
<dbReference type="SUPFAM" id="SSF48726">
    <property type="entry name" value="Immunoglobulin"/>
    <property type="match status" value="1"/>
</dbReference>
<dbReference type="PROSITE" id="PS50853">
    <property type="entry name" value="FN3"/>
    <property type="match status" value="1"/>
</dbReference>
<dbReference type="PROSITE" id="PS01354">
    <property type="entry name" value="HEMATOPO_REC_L_F3"/>
    <property type="match status" value="1"/>
</dbReference>
<dbReference type="PROSITE" id="PS50835">
    <property type="entry name" value="IG_LIKE"/>
    <property type="match status" value="1"/>
</dbReference>